<organism>
    <name type="scientific">Yarrowia lipolytica (strain CLIB 122 / E 150)</name>
    <name type="common">Yeast</name>
    <name type="synonym">Candida lipolytica</name>
    <dbReference type="NCBI Taxonomy" id="284591"/>
    <lineage>
        <taxon>Eukaryota</taxon>
        <taxon>Fungi</taxon>
        <taxon>Dikarya</taxon>
        <taxon>Ascomycota</taxon>
        <taxon>Saccharomycotina</taxon>
        <taxon>Dipodascomycetes</taxon>
        <taxon>Dipodascales</taxon>
        <taxon>Dipodascales incertae sedis</taxon>
        <taxon>Yarrowia</taxon>
    </lineage>
</organism>
<reference key="1">
    <citation type="submission" date="1995-11" db="EMBL/GenBank/DDBJ databases">
        <authorList>
            <person name="Strick C.A."/>
            <person name="James L.C."/>
            <person name="Cole K.E."/>
            <person name="Elsenboss L.A."/>
        </authorList>
    </citation>
    <scope>NUCLEOTIDE SEQUENCE [GENOMIC DNA]</scope>
</reference>
<reference key="2">
    <citation type="journal article" date="2004" name="Nature">
        <title>Genome evolution in yeasts.</title>
        <authorList>
            <person name="Dujon B."/>
            <person name="Sherman D."/>
            <person name="Fischer G."/>
            <person name="Durrens P."/>
            <person name="Casaregola S."/>
            <person name="Lafontaine I."/>
            <person name="de Montigny J."/>
            <person name="Marck C."/>
            <person name="Neuveglise C."/>
            <person name="Talla E."/>
            <person name="Goffard N."/>
            <person name="Frangeul L."/>
            <person name="Aigle M."/>
            <person name="Anthouard V."/>
            <person name="Babour A."/>
            <person name="Barbe V."/>
            <person name="Barnay S."/>
            <person name="Blanchin S."/>
            <person name="Beckerich J.-M."/>
            <person name="Beyne E."/>
            <person name="Bleykasten C."/>
            <person name="Boisrame A."/>
            <person name="Boyer J."/>
            <person name="Cattolico L."/>
            <person name="Confanioleri F."/>
            <person name="de Daruvar A."/>
            <person name="Despons L."/>
            <person name="Fabre E."/>
            <person name="Fairhead C."/>
            <person name="Ferry-Dumazet H."/>
            <person name="Groppi A."/>
            <person name="Hantraye F."/>
            <person name="Hennequin C."/>
            <person name="Jauniaux N."/>
            <person name="Joyet P."/>
            <person name="Kachouri R."/>
            <person name="Kerrest A."/>
            <person name="Koszul R."/>
            <person name="Lemaire M."/>
            <person name="Lesur I."/>
            <person name="Ma L."/>
            <person name="Muller H."/>
            <person name="Nicaud J.-M."/>
            <person name="Nikolski M."/>
            <person name="Oztas S."/>
            <person name="Ozier-Kalogeropoulos O."/>
            <person name="Pellenz S."/>
            <person name="Potier S."/>
            <person name="Richard G.-F."/>
            <person name="Straub M.-L."/>
            <person name="Suleau A."/>
            <person name="Swennen D."/>
            <person name="Tekaia F."/>
            <person name="Wesolowski-Louvel M."/>
            <person name="Westhof E."/>
            <person name="Wirth B."/>
            <person name="Zeniou-Meyer M."/>
            <person name="Zivanovic Y."/>
            <person name="Bolotin-Fukuhara M."/>
            <person name="Thierry A."/>
            <person name="Bouchier C."/>
            <person name="Caudron B."/>
            <person name="Scarpelli C."/>
            <person name="Gaillardin C."/>
            <person name="Weissenbach J."/>
            <person name="Wincker P."/>
            <person name="Souciet J.-L."/>
        </authorList>
    </citation>
    <scope>NUCLEOTIDE SEQUENCE [LARGE SCALE GENOMIC DNA]</scope>
    <source>
        <strain>CLIB 122 / E 150</strain>
    </source>
</reference>
<keyword id="KW-0067">ATP-binding</keyword>
<keyword id="KW-0963">Cytoplasm</keyword>
<keyword id="KW-0436">Ligase</keyword>
<keyword id="KW-0460">Magnesium</keyword>
<keyword id="KW-0464">Manganese</keyword>
<keyword id="KW-0479">Metal-binding</keyword>
<keyword id="KW-0511">Multifunctional enzyme</keyword>
<keyword id="KW-0547">Nucleotide-binding</keyword>
<keyword id="KW-0658">Purine biosynthesis</keyword>
<keyword id="KW-1185">Reference proteome</keyword>
<gene>
    <name evidence="4" type="primary">ADE1</name>
    <name type="ordered locus">YALI0F21010g</name>
</gene>
<evidence type="ECO:0000250" key="1">
    <source>
        <dbReference type="UniProtKB" id="P20772"/>
    </source>
</evidence>
<evidence type="ECO:0000255" key="2"/>
<evidence type="ECO:0000255" key="3">
    <source>
        <dbReference type="PROSITE-ProRule" id="PRU00409"/>
    </source>
</evidence>
<evidence type="ECO:0000303" key="4">
    <source ref="1"/>
</evidence>
<evidence type="ECO:0000305" key="5"/>
<protein>
    <recommendedName>
        <fullName>Bifunctional purine biosynthetic protein ADE1</fullName>
    </recommendedName>
    <domain>
        <recommendedName>
            <fullName>Phosphoribosylamine--glycine ligase</fullName>
            <ecNumber evidence="1">6.3.4.13</ecNumber>
        </recommendedName>
        <alternativeName>
            <fullName>Glycinamide ribonucleotide synthetase</fullName>
            <shortName evidence="1">GAR synthetase</shortName>
            <shortName>GARS</shortName>
        </alternativeName>
        <alternativeName>
            <fullName>Phosphoribosylglycinamide synthetase</fullName>
        </alternativeName>
    </domain>
    <domain>
        <recommendedName>
            <fullName>Phosphoribosylformylglycinamidine cyclo-ligase</fullName>
            <ecNumber evidence="1">6.3.3.1</ecNumber>
        </recommendedName>
        <alternativeName>
            <fullName>AIR synthase</fullName>
            <shortName evidence="1">AIR synthetase</shortName>
            <shortName>AIRS</shortName>
        </alternativeName>
        <alternativeName>
            <fullName>Phosphoribosyl-aminoimidazole synthetase</fullName>
        </alternativeName>
    </domain>
</protein>
<name>PUR2_YARLI</name>
<sequence length="788" mass="83759">MSLRILLVGNGGREHALAWKLAQSPLVERIFVAPGNGGTDNPQGKIENIAIGSSQKDFAKLVEFAQSKDVGLVIPGPEQPLVEGIETHFRKVGIPVFGPSEKAAVMEGSKTFSKDFMKKHNIPTAAFENFTDYNKAVDYVKKVGHRVVIKASGLAAGKGVLIPTSTEEAIAAVKEVMQDKAFGEAGDEVVIEEFLEGDELSILAFSDGYTVVDMPPAQDHKRIGDGDQGLNTGGMGAYCPAPIGTPALLQEIKESILQPTIDGMRRDGIPFVGMLFTGIMLTPDGKPKVLEYNVRFGDPETQTILPLLSDDTDLAEVMLACVERRLDAVTLRVKPDAHAVTVVMSAGGYPESYKKGDAITVGGLPEQTYIFHAGTASENGQVITAGGRVIASTAVAPTLKDAVAQAYKGADAVEFNGKYNRKDIAYKAFRDAEKTSGGITYAQAGVSIDNGNKLVQQIKEKVKSTARPGTDSVIGGFGGLFDLKAAGFRDPLLVGATDGVGTKLKIAQSIDKHDTVGIDLVAMNVNDLVVQGAEPLVFLDYYATGKLDVNAAAAFVGGVADGCIQAGCALIGGETAEMPGIYYGNDYDANGTSIGAVERDAVLPRMDEIAKGDAILGLASSGVHSNGFSLVRKIIEHAGLTYTDACPWDQSKSLGEALLTPTRIYVKQLLPVINAKLTSALAHITGGGLVENIPRILPENYSAKIDVSTWPLPPVFQWLGKAGNVPKEDISKTLNMGIGMILVVKQEKVAEVTQLLEKVGEKVYQIGEIVPDNDVDEKTVLINTENWY</sequence>
<comment type="function">
    <text evidence="1">Catalyzes the second and fifth step in the 'de novo' purine biosynthesis pathway; contains phosphoribosylamine--glycine ligase (GARS) and phosphoribosylformylglycinamidine cyclo-ligase (AIRS) activities.</text>
</comment>
<comment type="catalytic activity">
    <reaction evidence="1">
        <text>5-phospho-beta-D-ribosylamine + glycine + ATP = N(1)-(5-phospho-beta-D-ribosyl)glycinamide + ADP + phosphate + H(+)</text>
        <dbReference type="Rhea" id="RHEA:17453"/>
        <dbReference type="ChEBI" id="CHEBI:15378"/>
        <dbReference type="ChEBI" id="CHEBI:30616"/>
        <dbReference type="ChEBI" id="CHEBI:43474"/>
        <dbReference type="ChEBI" id="CHEBI:57305"/>
        <dbReference type="ChEBI" id="CHEBI:58681"/>
        <dbReference type="ChEBI" id="CHEBI:143788"/>
        <dbReference type="ChEBI" id="CHEBI:456216"/>
        <dbReference type="EC" id="6.3.4.13"/>
    </reaction>
</comment>
<comment type="catalytic activity">
    <reaction evidence="1">
        <text>2-formamido-N(1)-(5-O-phospho-beta-D-ribosyl)acetamidine + ATP = 5-amino-1-(5-phospho-beta-D-ribosyl)imidazole + ADP + phosphate + H(+)</text>
        <dbReference type="Rhea" id="RHEA:23032"/>
        <dbReference type="ChEBI" id="CHEBI:15378"/>
        <dbReference type="ChEBI" id="CHEBI:30616"/>
        <dbReference type="ChEBI" id="CHEBI:43474"/>
        <dbReference type="ChEBI" id="CHEBI:137981"/>
        <dbReference type="ChEBI" id="CHEBI:147287"/>
        <dbReference type="ChEBI" id="CHEBI:456216"/>
        <dbReference type="EC" id="6.3.3.1"/>
    </reaction>
</comment>
<comment type="cofactor">
    <cofactor evidence="3">
        <name>Mg(2+)</name>
        <dbReference type="ChEBI" id="CHEBI:18420"/>
    </cofactor>
    <cofactor evidence="3">
        <name>Mn(2+)</name>
        <dbReference type="ChEBI" id="CHEBI:29035"/>
    </cofactor>
    <text evidence="5">Binds two magnesium or manganese ions per subunit.</text>
</comment>
<comment type="pathway">
    <text>Purine metabolism; IMP biosynthesis via de novo pathway; 5-amino-1-(5-phospho-D-ribosyl)imidazole from N(2)-formyl-N(1)-(5-phospho-D-ribosyl)glycinamide: step 2/2.</text>
</comment>
<comment type="pathway">
    <text>Purine metabolism; IMP biosynthesis via de novo pathway; N(1)-(5-phospho-D-ribosyl)glycinamide from 5-phospho-alpha-D-ribose 1-diphosphate: step 2/2.</text>
</comment>
<comment type="subcellular location">
    <subcellularLocation>
        <location evidence="1">Cytoplasm</location>
        <location evidence="1">Cytosol</location>
    </subcellularLocation>
</comment>
<comment type="similarity">
    <text evidence="5">In the N-terminal section; belongs to the GARS family.</text>
</comment>
<comment type="similarity">
    <text evidence="5">In the C-terminal section; belongs to the AIR synthase family.</text>
</comment>
<accession>Q99148</accession>
<feature type="chain" id="PRO_0000074940" description="Bifunctional purine biosynthetic protein ADE1">
    <location>
        <begin position="1"/>
        <end position="788"/>
    </location>
</feature>
<feature type="domain" description="ATP-grasp" evidence="3">
    <location>
        <begin position="114"/>
        <end position="323"/>
    </location>
</feature>
<feature type="region of interest" description="GARS" evidence="2">
    <location>
        <begin position="1"/>
        <end position="429"/>
    </location>
</feature>
<feature type="region of interest" description="AIRS" evidence="2">
    <location>
        <begin position="439"/>
        <end position="752"/>
    </location>
</feature>
<feature type="binding site" evidence="3">
    <location>
        <begin position="140"/>
        <end position="201"/>
    </location>
    <ligand>
        <name>ATP</name>
        <dbReference type="ChEBI" id="CHEBI:30616"/>
    </ligand>
</feature>
<feature type="binding site" evidence="3">
    <location>
        <position position="291"/>
    </location>
    <ligand>
        <name>Mg(2+)</name>
        <dbReference type="ChEBI" id="CHEBI:18420"/>
    </ligand>
</feature>
<feature type="binding site" evidence="3">
    <location>
        <position position="293"/>
    </location>
    <ligand>
        <name>Mg(2+)</name>
        <dbReference type="ChEBI" id="CHEBI:18420"/>
    </ligand>
</feature>
<proteinExistence type="inferred from homology"/>
<dbReference type="EC" id="6.3.4.13" evidence="1"/>
<dbReference type="EC" id="6.3.3.1" evidence="1"/>
<dbReference type="EMBL" id="U40565">
    <property type="protein sequence ID" value="AAA85393.1"/>
    <property type="molecule type" value="Genomic_DNA"/>
</dbReference>
<dbReference type="EMBL" id="CR382132">
    <property type="protein sequence ID" value="CAG78498.1"/>
    <property type="molecule type" value="Genomic_DNA"/>
</dbReference>
<dbReference type="RefSeq" id="XP_505689.1">
    <property type="nucleotide sequence ID" value="XM_505689.1"/>
</dbReference>
<dbReference type="SMR" id="Q99148"/>
<dbReference type="FunCoup" id="Q99148">
    <property type="interactions" value="1212"/>
</dbReference>
<dbReference type="STRING" id="284591.Q99148"/>
<dbReference type="EnsemblFungi" id="CAG78498">
    <property type="protein sequence ID" value="CAG78498"/>
    <property type="gene ID" value="YALI0_F21010g"/>
</dbReference>
<dbReference type="KEGG" id="yli:2907698"/>
<dbReference type="VEuPathDB" id="FungiDB:YALI0_F21010g"/>
<dbReference type="HOGENOM" id="CLU_005361_1_0_1"/>
<dbReference type="InParanoid" id="Q99148"/>
<dbReference type="OMA" id="EVMQACC"/>
<dbReference type="OrthoDB" id="6027at4891"/>
<dbReference type="UniPathway" id="UPA00074">
    <property type="reaction ID" value="UER00125"/>
</dbReference>
<dbReference type="UniPathway" id="UPA00074">
    <property type="reaction ID" value="UER00129"/>
</dbReference>
<dbReference type="Proteomes" id="UP000001300">
    <property type="component" value="Chromosome F"/>
</dbReference>
<dbReference type="GO" id="GO:0005829">
    <property type="term" value="C:cytosol"/>
    <property type="evidence" value="ECO:0000318"/>
    <property type="project" value="GO_Central"/>
</dbReference>
<dbReference type="GO" id="GO:0005524">
    <property type="term" value="F:ATP binding"/>
    <property type="evidence" value="ECO:0007669"/>
    <property type="project" value="UniProtKB-KW"/>
</dbReference>
<dbReference type="GO" id="GO:0046872">
    <property type="term" value="F:metal ion binding"/>
    <property type="evidence" value="ECO:0007669"/>
    <property type="project" value="UniProtKB-KW"/>
</dbReference>
<dbReference type="GO" id="GO:0004637">
    <property type="term" value="F:phosphoribosylamine-glycine ligase activity"/>
    <property type="evidence" value="ECO:0000318"/>
    <property type="project" value="GO_Central"/>
</dbReference>
<dbReference type="GO" id="GO:0004641">
    <property type="term" value="F:phosphoribosylformylglycinamidine cyclo-ligase activity"/>
    <property type="evidence" value="ECO:0000318"/>
    <property type="project" value="GO_Central"/>
</dbReference>
<dbReference type="GO" id="GO:0006189">
    <property type="term" value="P:'de novo' IMP biosynthetic process"/>
    <property type="evidence" value="ECO:0007669"/>
    <property type="project" value="UniProtKB-UniPathway"/>
</dbReference>
<dbReference type="GO" id="GO:0046084">
    <property type="term" value="P:adenine biosynthetic process"/>
    <property type="evidence" value="ECO:0000318"/>
    <property type="project" value="GO_Central"/>
</dbReference>
<dbReference type="GO" id="GO:0006164">
    <property type="term" value="P:purine nucleotide biosynthetic process"/>
    <property type="evidence" value="ECO:0000318"/>
    <property type="project" value="GO_Central"/>
</dbReference>
<dbReference type="CDD" id="cd02196">
    <property type="entry name" value="PurM"/>
    <property type="match status" value="1"/>
</dbReference>
<dbReference type="FunFam" id="3.40.50.20:FF:000006">
    <property type="entry name" value="Phosphoribosylamine--glycine ligase, chloroplastic"/>
    <property type="match status" value="1"/>
</dbReference>
<dbReference type="FunFam" id="3.30.1490.20:FF:000006">
    <property type="entry name" value="phosphoribosylamine--glycine ligase, chloroplastic-like"/>
    <property type="match status" value="1"/>
</dbReference>
<dbReference type="FunFam" id="3.30.1330.10:FF:000001">
    <property type="entry name" value="Phosphoribosylformylglycinamidine cyclo-ligase"/>
    <property type="match status" value="1"/>
</dbReference>
<dbReference type="FunFam" id="3.30.470.20:FF:000018">
    <property type="entry name" value="Trifunctional purine biosynthetic protein adenosine-3"/>
    <property type="match status" value="1"/>
</dbReference>
<dbReference type="FunFam" id="3.90.600.10:FF:000001">
    <property type="entry name" value="Trifunctional purine biosynthetic protein adenosine-3"/>
    <property type="match status" value="1"/>
</dbReference>
<dbReference type="FunFam" id="3.90.650.10:FF:000007">
    <property type="entry name" value="Trifunctional purine biosynthetic protein adenosine-3"/>
    <property type="match status" value="1"/>
</dbReference>
<dbReference type="Gene3D" id="3.40.50.20">
    <property type="match status" value="1"/>
</dbReference>
<dbReference type="Gene3D" id="3.30.1490.20">
    <property type="entry name" value="ATP-grasp fold, A domain"/>
    <property type="match status" value="1"/>
</dbReference>
<dbReference type="Gene3D" id="3.30.470.20">
    <property type="entry name" value="ATP-grasp fold, B domain"/>
    <property type="match status" value="1"/>
</dbReference>
<dbReference type="Gene3D" id="3.90.600.10">
    <property type="entry name" value="Phosphoribosylglycinamide synthetase, C-terminal domain"/>
    <property type="match status" value="1"/>
</dbReference>
<dbReference type="Gene3D" id="3.90.650.10">
    <property type="entry name" value="PurM-like C-terminal domain"/>
    <property type="match status" value="1"/>
</dbReference>
<dbReference type="Gene3D" id="3.30.1330.10">
    <property type="entry name" value="PurM-like, N-terminal domain"/>
    <property type="match status" value="1"/>
</dbReference>
<dbReference type="HAMAP" id="MF_00741">
    <property type="entry name" value="AIRS"/>
    <property type="match status" value="1"/>
</dbReference>
<dbReference type="HAMAP" id="MF_00138">
    <property type="entry name" value="GARS"/>
    <property type="match status" value="1"/>
</dbReference>
<dbReference type="InterPro" id="IPR011761">
    <property type="entry name" value="ATP-grasp"/>
</dbReference>
<dbReference type="InterPro" id="IPR013815">
    <property type="entry name" value="ATP_grasp_subdomain_1"/>
</dbReference>
<dbReference type="InterPro" id="IPR016185">
    <property type="entry name" value="PreATP-grasp_dom_sf"/>
</dbReference>
<dbReference type="InterPro" id="IPR020561">
    <property type="entry name" value="PRibGlycinamid_synth_ATP-grasp"/>
</dbReference>
<dbReference type="InterPro" id="IPR000115">
    <property type="entry name" value="PRibGlycinamide_synth"/>
</dbReference>
<dbReference type="InterPro" id="IPR020560">
    <property type="entry name" value="PRibGlycinamide_synth_C-dom"/>
</dbReference>
<dbReference type="InterPro" id="IPR037123">
    <property type="entry name" value="PRibGlycinamide_synth_C_sf"/>
</dbReference>
<dbReference type="InterPro" id="IPR020559">
    <property type="entry name" value="PRibGlycinamide_synth_CS"/>
</dbReference>
<dbReference type="InterPro" id="IPR020562">
    <property type="entry name" value="PRibGlycinamide_synth_N"/>
</dbReference>
<dbReference type="InterPro" id="IPR010918">
    <property type="entry name" value="PurM-like_C_dom"/>
</dbReference>
<dbReference type="InterPro" id="IPR036676">
    <property type="entry name" value="PurM-like_C_sf"/>
</dbReference>
<dbReference type="InterPro" id="IPR016188">
    <property type="entry name" value="PurM-like_N"/>
</dbReference>
<dbReference type="InterPro" id="IPR036921">
    <property type="entry name" value="PurM-like_N_sf"/>
</dbReference>
<dbReference type="InterPro" id="IPR004733">
    <property type="entry name" value="PurM_cligase"/>
</dbReference>
<dbReference type="InterPro" id="IPR011054">
    <property type="entry name" value="Rudment_hybrid_motif"/>
</dbReference>
<dbReference type="NCBIfam" id="TIGR00877">
    <property type="entry name" value="purD"/>
    <property type="match status" value="1"/>
</dbReference>
<dbReference type="NCBIfam" id="TIGR00878">
    <property type="entry name" value="purM"/>
    <property type="match status" value="1"/>
</dbReference>
<dbReference type="PANTHER" id="PTHR10520:SF12">
    <property type="entry name" value="TRIFUNCTIONAL PURINE BIOSYNTHETIC PROTEIN ADENOSINE-3"/>
    <property type="match status" value="1"/>
</dbReference>
<dbReference type="PANTHER" id="PTHR10520">
    <property type="entry name" value="TRIFUNCTIONAL PURINE BIOSYNTHETIC PROTEIN ADENOSINE-3-RELATED"/>
    <property type="match status" value="1"/>
</dbReference>
<dbReference type="Pfam" id="PF00586">
    <property type="entry name" value="AIRS"/>
    <property type="match status" value="1"/>
</dbReference>
<dbReference type="Pfam" id="PF02769">
    <property type="entry name" value="AIRS_C"/>
    <property type="match status" value="1"/>
</dbReference>
<dbReference type="Pfam" id="PF01071">
    <property type="entry name" value="GARS_A"/>
    <property type="match status" value="1"/>
</dbReference>
<dbReference type="Pfam" id="PF02843">
    <property type="entry name" value="GARS_C"/>
    <property type="match status" value="1"/>
</dbReference>
<dbReference type="Pfam" id="PF02844">
    <property type="entry name" value="GARS_N"/>
    <property type="match status" value="1"/>
</dbReference>
<dbReference type="SMART" id="SM01209">
    <property type="entry name" value="GARS_A"/>
    <property type="match status" value="1"/>
</dbReference>
<dbReference type="SMART" id="SM01210">
    <property type="entry name" value="GARS_C"/>
    <property type="match status" value="1"/>
</dbReference>
<dbReference type="SUPFAM" id="SSF56059">
    <property type="entry name" value="Glutathione synthetase ATP-binding domain-like"/>
    <property type="match status" value="1"/>
</dbReference>
<dbReference type="SUPFAM" id="SSF52440">
    <property type="entry name" value="PreATP-grasp domain"/>
    <property type="match status" value="1"/>
</dbReference>
<dbReference type="SUPFAM" id="SSF56042">
    <property type="entry name" value="PurM C-terminal domain-like"/>
    <property type="match status" value="1"/>
</dbReference>
<dbReference type="SUPFAM" id="SSF55326">
    <property type="entry name" value="PurM N-terminal domain-like"/>
    <property type="match status" value="1"/>
</dbReference>
<dbReference type="SUPFAM" id="SSF51246">
    <property type="entry name" value="Rudiment single hybrid motif"/>
    <property type="match status" value="1"/>
</dbReference>
<dbReference type="PROSITE" id="PS50975">
    <property type="entry name" value="ATP_GRASP"/>
    <property type="match status" value="1"/>
</dbReference>
<dbReference type="PROSITE" id="PS00184">
    <property type="entry name" value="GARS"/>
    <property type="match status" value="1"/>
</dbReference>